<evidence type="ECO:0000255" key="1">
    <source>
        <dbReference type="HAMAP-Rule" id="MF_01337"/>
    </source>
</evidence>
<evidence type="ECO:0000305" key="2"/>
<reference key="1">
    <citation type="submission" date="2007-08" db="EMBL/GenBank/DDBJ databases">
        <title>Complete sequence of Shewanella sediminis HAW-EB3.</title>
        <authorList>
            <consortium name="US DOE Joint Genome Institute"/>
            <person name="Copeland A."/>
            <person name="Lucas S."/>
            <person name="Lapidus A."/>
            <person name="Barry K."/>
            <person name="Glavina del Rio T."/>
            <person name="Dalin E."/>
            <person name="Tice H."/>
            <person name="Pitluck S."/>
            <person name="Chertkov O."/>
            <person name="Brettin T."/>
            <person name="Bruce D."/>
            <person name="Detter J.C."/>
            <person name="Han C."/>
            <person name="Schmutz J."/>
            <person name="Larimer F."/>
            <person name="Land M."/>
            <person name="Hauser L."/>
            <person name="Kyrpides N."/>
            <person name="Kim E."/>
            <person name="Zhao J.-S."/>
            <person name="Richardson P."/>
        </authorList>
    </citation>
    <scope>NUCLEOTIDE SEQUENCE [LARGE SCALE GENOMIC DNA]</scope>
    <source>
        <strain>HAW-EB3</strain>
    </source>
</reference>
<organism>
    <name type="scientific">Shewanella sediminis (strain HAW-EB3)</name>
    <dbReference type="NCBI Taxonomy" id="425104"/>
    <lineage>
        <taxon>Bacteria</taxon>
        <taxon>Pseudomonadati</taxon>
        <taxon>Pseudomonadota</taxon>
        <taxon>Gammaproteobacteria</taxon>
        <taxon>Alteromonadales</taxon>
        <taxon>Shewanellaceae</taxon>
        <taxon>Shewanella</taxon>
    </lineage>
</organism>
<name>RL18_SHESH</name>
<protein>
    <recommendedName>
        <fullName evidence="1">Large ribosomal subunit protein uL18</fullName>
    </recommendedName>
    <alternativeName>
        <fullName evidence="2">50S ribosomal protein L18</fullName>
    </alternativeName>
</protein>
<dbReference type="EMBL" id="CP000821">
    <property type="protein sequence ID" value="ABV38905.1"/>
    <property type="molecule type" value="Genomic_DNA"/>
</dbReference>
<dbReference type="RefSeq" id="WP_012144634.1">
    <property type="nucleotide sequence ID" value="NC_009831.1"/>
</dbReference>
<dbReference type="SMR" id="A8G1D2"/>
<dbReference type="STRING" id="425104.Ssed_4301"/>
<dbReference type="KEGG" id="sse:Ssed_4301"/>
<dbReference type="eggNOG" id="COG0256">
    <property type="taxonomic scope" value="Bacteria"/>
</dbReference>
<dbReference type="HOGENOM" id="CLU_098841_0_1_6"/>
<dbReference type="OrthoDB" id="9810939at2"/>
<dbReference type="Proteomes" id="UP000002015">
    <property type="component" value="Chromosome"/>
</dbReference>
<dbReference type="GO" id="GO:0022625">
    <property type="term" value="C:cytosolic large ribosomal subunit"/>
    <property type="evidence" value="ECO:0007669"/>
    <property type="project" value="TreeGrafter"/>
</dbReference>
<dbReference type="GO" id="GO:0008097">
    <property type="term" value="F:5S rRNA binding"/>
    <property type="evidence" value="ECO:0007669"/>
    <property type="project" value="TreeGrafter"/>
</dbReference>
<dbReference type="GO" id="GO:0003735">
    <property type="term" value="F:structural constituent of ribosome"/>
    <property type="evidence" value="ECO:0007669"/>
    <property type="project" value="InterPro"/>
</dbReference>
<dbReference type="GO" id="GO:0006412">
    <property type="term" value="P:translation"/>
    <property type="evidence" value="ECO:0007669"/>
    <property type="project" value="UniProtKB-UniRule"/>
</dbReference>
<dbReference type="CDD" id="cd00432">
    <property type="entry name" value="Ribosomal_L18_L5e"/>
    <property type="match status" value="1"/>
</dbReference>
<dbReference type="FunFam" id="3.30.420.100:FF:000001">
    <property type="entry name" value="50S ribosomal protein L18"/>
    <property type="match status" value="1"/>
</dbReference>
<dbReference type="Gene3D" id="3.30.420.100">
    <property type="match status" value="1"/>
</dbReference>
<dbReference type="HAMAP" id="MF_01337_B">
    <property type="entry name" value="Ribosomal_uL18_B"/>
    <property type="match status" value="1"/>
</dbReference>
<dbReference type="InterPro" id="IPR004389">
    <property type="entry name" value="Ribosomal_uL18_bac-type"/>
</dbReference>
<dbReference type="InterPro" id="IPR005484">
    <property type="entry name" value="Ribosomal_uL18_bac/euk"/>
</dbReference>
<dbReference type="NCBIfam" id="TIGR00060">
    <property type="entry name" value="L18_bact"/>
    <property type="match status" value="1"/>
</dbReference>
<dbReference type="PANTHER" id="PTHR12899">
    <property type="entry name" value="39S RIBOSOMAL PROTEIN L18, MITOCHONDRIAL"/>
    <property type="match status" value="1"/>
</dbReference>
<dbReference type="PANTHER" id="PTHR12899:SF3">
    <property type="entry name" value="LARGE RIBOSOMAL SUBUNIT PROTEIN UL18M"/>
    <property type="match status" value="1"/>
</dbReference>
<dbReference type="Pfam" id="PF00861">
    <property type="entry name" value="Ribosomal_L18p"/>
    <property type="match status" value="1"/>
</dbReference>
<dbReference type="SUPFAM" id="SSF53137">
    <property type="entry name" value="Translational machinery components"/>
    <property type="match status" value="1"/>
</dbReference>
<comment type="function">
    <text evidence="1">This is one of the proteins that bind and probably mediate the attachment of the 5S RNA into the large ribosomal subunit, where it forms part of the central protuberance.</text>
</comment>
<comment type="subunit">
    <text evidence="1">Part of the 50S ribosomal subunit; part of the 5S rRNA/L5/L18/L25 subcomplex. Contacts the 5S and 23S rRNAs.</text>
</comment>
<comment type="similarity">
    <text evidence="1">Belongs to the universal ribosomal protein uL18 family.</text>
</comment>
<gene>
    <name evidence="1" type="primary">rplR</name>
    <name type="ordered locus">Ssed_4301</name>
</gene>
<accession>A8G1D2</accession>
<sequence>MDKKTSRLRRATRARKKIQELGVNRLVVHRTPRHTYAQVISPDSQVLAAASTAEKAVTEQLKYTGNVDAAKAVGKTVAERAIEKGVTVVAFDRSGFKYHGRVAALADAAREAGLKF</sequence>
<feature type="chain" id="PRO_1000086688" description="Large ribosomal subunit protein uL18">
    <location>
        <begin position="1"/>
        <end position="116"/>
    </location>
</feature>
<proteinExistence type="inferred from homology"/>
<keyword id="KW-1185">Reference proteome</keyword>
<keyword id="KW-0687">Ribonucleoprotein</keyword>
<keyword id="KW-0689">Ribosomal protein</keyword>
<keyword id="KW-0694">RNA-binding</keyword>
<keyword id="KW-0699">rRNA-binding</keyword>